<reference key="1">
    <citation type="journal article" date="2005" name="Science">
        <title>The genome of the basidiomycetous yeast and human pathogen Cryptococcus neoformans.</title>
        <authorList>
            <person name="Loftus B.J."/>
            <person name="Fung E."/>
            <person name="Roncaglia P."/>
            <person name="Rowley D."/>
            <person name="Amedeo P."/>
            <person name="Bruno D."/>
            <person name="Vamathevan J."/>
            <person name="Miranda M."/>
            <person name="Anderson I.J."/>
            <person name="Fraser J.A."/>
            <person name="Allen J.E."/>
            <person name="Bosdet I.E."/>
            <person name="Brent M.R."/>
            <person name="Chiu R."/>
            <person name="Doering T.L."/>
            <person name="Donlin M.J."/>
            <person name="D'Souza C.A."/>
            <person name="Fox D.S."/>
            <person name="Grinberg V."/>
            <person name="Fu J."/>
            <person name="Fukushima M."/>
            <person name="Haas B.J."/>
            <person name="Huang J.C."/>
            <person name="Janbon G."/>
            <person name="Jones S.J.M."/>
            <person name="Koo H.L."/>
            <person name="Krzywinski M.I."/>
            <person name="Kwon-Chung K.J."/>
            <person name="Lengeler K.B."/>
            <person name="Maiti R."/>
            <person name="Marra M.A."/>
            <person name="Marra R.E."/>
            <person name="Mathewson C.A."/>
            <person name="Mitchell T.G."/>
            <person name="Pertea M."/>
            <person name="Riggs F.R."/>
            <person name="Salzberg S.L."/>
            <person name="Schein J.E."/>
            <person name="Shvartsbeyn A."/>
            <person name="Shin H."/>
            <person name="Shumway M."/>
            <person name="Specht C.A."/>
            <person name="Suh B.B."/>
            <person name="Tenney A."/>
            <person name="Utterback T.R."/>
            <person name="Wickes B.L."/>
            <person name="Wortman J.R."/>
            <person name="Wye N.H."/>
            <person name="Kronstad J.W."/>
            <person name="Lodge J.K."/>
            <person name="Heitman J."/>
            <person name="Davis R.W."/>
            <person name="Fraser C.M."/>
            <person name="Hyman R.W."/>
        </authorList>
    </citation>
    <scope>NUCLEOTIDE SEQUENCE [LARGE SCALE GENOMIC DNA]</scope>
    <source>
        <strain>JEC21 / ATCC MYA-565</strain>
    </source>
</reference>
<feature type="chain" id="PRO_0000232373" description="Pre-mRNA-splicing ATP-dependent RNA helicase PRP28">
    <location>
        <begin position="1"/>
        <end position="738"/>
    </location>
</feature>
<feature type="domain" description="Helicase ATP-binding" evidence="2">
    <location>
        <begin position="346"/>
        <end position="545"/>
    </location>
</feature>
<feature type="domain" description="Helicase C-terminal" evidence="3">
    <location>
        <begin position="556"/>
        <end position="719"/>
    </location>
</feature>
<feature type="region of interest" description="Disordered" evidence="4">
    <location>
        <begin position="1"/>
        <end position="184"/>
    </location>
</feature>
<feature type="region of interest" description="Disordered" evidence="4">
    <location>
        <begin position="239"/>
        <end position="284"/>
    </location>
</feature>
<feature type="region of interest" description="Disordered" evidence="4">
    <location>
        <begin position="709"/>
        <end position="738"/>
    </location>
</feature>
<feature type="short sequence motif" description="Q motif">
    <location>
        <begin position="315"/>
        <end position="343"/>
    </location>
</feature>
<feature type="short sequence motif" description="DEAD box">
    <location>
        <begin position="472"/>
        <end position="475"/>
    </location>
</feature>
<feature type="compositionally biased region" description="Basic and acidic residues" evidence="4">
    <location>
        <begin position="10"/>
        <end position="76"/>
    </location>
</feature>
<feature type="compositionally biased region" description="Basic and acidic residues" evidence="4">
    <location>
        <begin position="86"/>
        <end position="111"/>
    </location>
</feature>
<feature type="compositionally biased region" description="Low complexity" evidence="4">
    <location>
        <begin position="154"/>
        <end position="173"/>
    </location>
</feature>
<feature type="compositionally biased region" description="Basic and acidic residues" evidence="4">
    <location>
        <begin position="251"/>
        <end position="284"/>
    </location>
</feature>
<feature type="compositionally biased region" description="Basic and acidic residues" evidence="4">
    <location>
        <begin position="715"/>
        <end position="738"/>
    </location>
</feature>
<feature type="binding site" evidence="2">
    <location>
        <begin position="359"/>
        <end position="366"/>
    </location>
    <ligand>
        <name>ATP</name>
        <dbReference type="ChEBI" id="CHEBI:30616"/>
    </ligand>
</feature>
<comment type="function">
    <text evidence="1">ATP-dependent RNA helicase involved in mRNA splicing. May destabilize the U1/5'-splice site duplex to permit an effective competition for the 5'-splice site by the U6 snRNA, resulting in the switch between U1 and U6 at the 5'-splice site. May also act to unwind the U4/U6 base-pairing interaction in the U4/U6/U5 snRNP, facilitating the first covalent step of splicing (By similarity).</text>
</comment>
<comment type="catalytic activity">
    <reaction>
        <text>ATP + H2O = ADP + phosphate + H(+)</text>
        <dbReference type="Rhea" id="RHEA:13065"/>
        <dbReference type="ChEBI" id="CHEBI:15377"/>
        <dbReference type="ChEBI" id="CHEBI:15378"/>
        <dbReference type="ChEBI" id="CHEBI:30616"/>
        <dbReference type="ChEBI" id="CHEBI:43474"/>
        <dbReference type="ChEBI" id="CHEBI:456216"/>
        <dbReference type="EC" id="3.6.4.13"/>
    </reaction>
</comment>
<comment type="subunit">
    <text evidence="1">Component of the U5 snRNP complex.</text>
</comment>
<comment type="subcellular location">
    <subcellularLocation>
        <location evidence="1">Cytoplasm</location>
    </subcellularLocation>
    <subcellularLocation>
        <location evidence="1">Nucleus</location>
    </subcellularLocation>
</comment>
<comment type="domain">
    <text>The Q motif is unique to and characteristic of the DEAD box family of RNA helicases and controls ATP binding and hydrolysis.</text>
</comment>
<comment type="similarity">
    <text evidence="5">Belongs to the DEAD box helicase family. DDX23/PRP28 subfamily.</text>
</comment>
<accession>P0CQ88</accession>
<accession>Q55Z43</accession>
<accession>Q5KNF8</accession>
<evidence type="ECO:0000250" key="1"/>
<evidence type="ECO:0000255" key="2">
    <source>
        <dbReference type="PROSITE-ProRule" id="PRU00541"/>
    </source>
</evidence>
<evidence type="ECO:0000255" key="3">
    <source>
        <dbReference type="PROSITE-ProRule" id="PRU00542"/>
    </source>
</evidence>
<evidence type="ECO:0000256" key="4">
    <source>
        <dbReference type="SAM" id="MobiDB-lite"/>
    </source>
</evidence>
<evidence type="ECO:0000305" key="5"/>
<dbReference type="EC" id="3.6.4.13"/>
<dbReference type="EMBL" id="AE017341">
    <property type="protein sequence ID" value="AAW41184.1"/>
    <property type="molecule type" value="Genomic_DNA"/>
</dbReference>
<dbReference type="RefSeq" id="XP_567003.1">
    <property type="nucleotide sequence ID" value="XM_567003.1"/>
</dbReference>
<dbReference type="SMR" id="P0CQ88"/>
<dbReference type="FunCoup" id="P0CQ88">
    <property type="interactions" value="608"/>
</dbReference>
<dbReference type="STRING" id="214684.P0CQ88"/>
<dbReference type="PaxDb" id="214684-P0CQ88"/>
<dbReference type="EnsemblFungi" id="AAW41184">
    <property type="protein sequence ID" value="AAW41184"/>
    <property type="gene ID" value="CNA06640"/>
</dbReference>
<dbReference type="GeneID" id="3253868"/>
<dbReference type="KEGG" id="cne:CNA06640"/>
<dbReference type="VEuPathDB" id="FungiDB:CNA06640"/>
<dbReference type="eggNOG" id="KOG0333">
    <property type="taxonomic scope" value="Eukaryota"/>
</dbReference>
<dbReference type="HOGENOM" id="CLU_003041_11_3_1"/>
<dbReference type="InParanoid" id="P0CQ88"/>
<dbReference type="OMA" id="ARDIKHM"/>
<dbReference type="OrthoDB" id="196131at2759"/>
<dbReference type="Proteomes" id="UP000002149">
    <property type="component" value="Chromosome 1"/>
</dbReference>
<dbReference type="GO" id="GO:0071013">
    <property type="term" value="C:catalytic step 2 spliceosome"/>
    <property type="evidence" value="ECO:0000318"/>
    <property type="project" value="GO_Central"/>
</dbReference>
<dbReference type="GO" id="GO:0005737">
    <property type="term" value="C:cytoplasm"/>
    <property type="evidence" value="ECO:0007669"/>
    <property type="project" value="UniProtKB-SubCell"/>
</dbReference>
<dbReference type="GO" id="GO:0005524">
    <property type="term" value="F:ATP binding"/>
    <property type="evidence" value="ECO:0007669"/>
    <property type="project" value="UniProtKB-KW"/>
</dbReference>
<dbReference type="GO" id="GO:0016887">
    <property type="term" value="F:ATP hydrolysis activity"/>
    <property type="evidence" value="ECO:0007669"/>
    <property type="project" value="RHEA"/>
</dbReference>
<dbReference type="GO" id="GO:0003729">
    <property type="term" value="F:mRNA binding"/>
    <property type="evidence" value="ECO:0000318"/>
    <property type="project" value="GO_Central"/>
</dbReference>
<dbReference type="GO" id="GO:0003724">
    <property type="term" value="F:RNA helicase activity"/>
    <property type="evidence" value="ECO:0007669"/>
    <property type="project" value="UniProtKB-EC"/>
</dbReference>
<dbReference type="GO" id="GO:0000398">
    <property type="term" value="P:mRNA splicing, via spliceosome"/>
    <property type="evidence" value="ECO:0000318"/>
    <property type="project" value="GO_Central"/>
</dbReference>
<dbReference type="CDD" id="cd17945">
    <property type="entry name" value="DEADc_DDX23"/>
    <property type="match status" value="1"/>
</dbReference>
<dbReference type="CDD" id="cd18787">
    <property type="entry name" value="SF2_C_DEAD"/>
    <property type="match status" value="1"/>
</dbReference>
<dbReference type="Gene3D" id="3.40.50.300">
    <property type="entry name" value="P-loop containing nucleotide triphosphate hydrolases"/>
    <property type="match status" value="2"/>
</dbReference>
<dbReference type="InterPro" id="IPR011545">
    <property type="entry name" value="DEAD/DEAH_box_helicase_dom"/>
</dbReference>
<dbReference type="InterPro" id="IPR014001">
    <property type="entry name" value="Helicase_ATP-bd"/>
</dbReference>
<dbReference type="InterPro" id="IPR001650">
    <property type="entry name" value="Helicase_C-like"/>
</dbReference>
<dbReference type="InterPro" id="IPR027417">
    <property type="entry name" value="P-loop_NTPase"/>
</dbReference>
<dbReference type="InterPro" id="IPR000629">
    <property type="entry name" value="RNA-helicase_DEAD-box_CS"/>
</dbReference>
<dbReference type="InterPro" id="IPR014014">
    <property type="entry name" value="RNA_helicase_DEAD_Q_motif"/>
</dbReference>
<dbReference type="PANTHER" id="PTHR47958">
    <property type="entry name" value="ATP-DEPENDENT RNA HELICASE DBP3"/>
    <property type="match status" value="1"/>
</dbReference>
<dbReference type="Pfam" id="PF25430">
    <property type="entry name" value="DDX23"/>
    <property type="match status" value="1"/>
</dbReference>
<dbReference type="Pfam" id="PF00270">
    <property type="entry name" value="DEAD"/>
    <property type="match status" value="1"/>
</dbReference>
<dbReference type="Pfam" id="PF00271">
    <property type="entry name" value="Helicase_C"/>
    <property type="match status" value="1"/>
</dbReference>
<dbReference type="SMART" id="SM00487">
    <property type="entry name" value="DEXDc"/>
    <property type="match status" value="1"/>
</dbReference>
<dbReference type="SMART" id="SM00490">
    <property type="entry name" value="HELICc"/>
    <property type="match status" value="1"/>
</dbReference>
<dbReference type="SUPFAM" id="SSF52540">
    <property type="entry name" value="P-loop containing nucleoside triphosphate hydrolases"/>
    <property type="match status" value="1"/>
</dbReference>
<dbReference type="PROSITE" id="PS00039">
    <property type="entry name" value="DEAD_ATP_HELICASE"/>
    <property type="match status" value="1"/>
</dbReference>
<dbReference type="PROSITE" id="PS51192">
    <property type="entry name" value="HELICASE_ATP_BIND_1"/>
    <property type="match status" value="1"/>
</dbReference>
<dbReference type="PROSITE" id="PS51194">
    <property type="entry name" value="HELICASE_CTER"/>
    <property type="match status" value="1"/>
</dbReference>
<dbReference type="PROSITE" id="PS51195">
    <property type="entry name" value="Q_MOTIF"/>
    <property type="match status" value="1"/>
</dbReference>
<gene>
    <name type="primary">PRP28</name>
    <name type="ordered locus">CNA06640</name>
</gene>
<organism>
    <name type="scientific">Cryptococcus neoformans var. neoformans serotype D (strain JEC21 / ATCC MYA-565)</name>
    <name type="common">Filobasidiella neoformans</name>
    <dbReference type="NCBI Taxonomy" id="214684"/>
    <lineage>
        <taxon>Eukaryota</taxon>
        <taxon>Fungi</taxon>
        <taxon>Dikarya</taxon>
        <taxon>Basidiomycota</taxon>
        <taxon>Agaricomycotina</taxon>
        <taxon>Tremellomycetes</taxon>
        <taxon>Tremellales</taxon>
        <taxon>Cryptococcaceae</taxon>
        <taxon>Cryptococcus</taxon>
        <taxon>Cryptococcus neoformans species complex</taxon>
    </lineage>
</organism>
<name>PRP28_CRYNJ</name>
<protein>
    <recommendedName>
        <fullName>Pre-mRNA-splicing ATP-dependent RNA helicase PRP28</fullName>
        <ecNumber>3.6.4.13</ecNumber>
    </recommendedName>
</protein>
<sequence length="738" mass="82157">MAGPLSVEDMLAKQKAEKEAAAKPKFLSKAERQKIALEKRQSEVREQQEREDAERRQREEFDRAAEEERRRHEQERYGYNAGPSGRNDRDGYGRDGYGRDNRRGFGDRRDGSGPAIPSGPRGAALPVGPRSMQSRNGGGLPYDGFAQGSPSQLSSTPVAGSASPGPASTTASGDAVPPSQAELEALRARYLGKRTDGKKPRLRKAQDKKIIFDWNEQDDTSAADQSSWTREVRELVPGGTMFGGRLAGMDGAKKNETRSDNHADPLERRRAVKGKDDDRHWSDKPLDEMKERDWRIFREDFSIAARGGGIPHPLRNWRESAIPSQILDIIEEIGYKEPSPIQRQAIPIGMQNRDLIGVAKTGSGKTAAFVIPMLDYIGHLPPLNDDNRHLGPYALIMAPTRELAQQIETETRRFALPLGYKCVSIVGGRSVEEQQFALRDGAEIIIATPGRLKDMVDKSILVMSQCRYVVMDEADRMVDLGFEVDLNFILDSMPATFVKPDDSVALQPTKEGEWQGWRVTTLFSATMPPAVERLARKYLIKPATVVIGNAGEAVDTVEQRVEFVHGDEKKKARLIEILRTIGLPPPIIVFVNQKKTADMVVKYVQQAGMSGVTLHSGKSQEQREAALQALRDGEISVLVATDLAGRGIDVPDVSLVINWQMSDTIEKYVHRIGRTGRAGKTGVAITFLTNDDDEVMYDLRIEVEKSKMSKMNPELARHEAARTRVTREMKRKRGDEEE</sequence>
<proteinExistence type="inferred from homology"/>
<keyword id="KW-0067">ATP-binding</keyword>
<keyword id="KW-0963">Cytoplasm</keyword>
<keyword id="KW-0347">Helicase</keyword>
<keyword id="KW-0378">Hydrolase</keyword>
<keyword id="KW-0507">mRNA processing</keyword>
<keyword id="KW-0508">mRNA splicing</keyword>
<keyword id="KW-0547">Nucleotide-binding</keyword>
<keyword id="KW-0539">Nucleus</keyword>
<keyword id="KW-1185">Reference proteome</keyword>